<feature type="signal peptide" evidence="1">
    <location>
        <begin position="1"/>
        <end position="29"/>
    </location>
</feature>
<feature type="chain" id="PRO_0000033754" description="Latency-associated peptide" evidence="1">
    <location>
        <begin position="30"/>
        <end position="278"/>
    </location>
</feature>
<feature type="chain" id="PRO_0000033755" description="Transforming growth factor beta-1" evidence="1">
    <location>
        <begin position="279"/>
        <end position="390"/>
    </location>
</feature>
<feature type="region of interest" description="Straightjacket domain" evidence="3">
    <location>
        <begin position="30"/>
        <end position="74"/>
    </location>
</feature>
<feature type="region of interest" description="Arm domain" evidence="3">
    <location>
        <begin position="75"/>
        <end position="271"/>
    </location>
</feature>
<feature type="region of interest" description="Bowtie tail" evidence="1">
    <location>
        <begin position="226"/>
        <end position="252"/>
    </location>
</feature>
<feature type="short sequence motif" description="Cell attachment site" evidence="4">
    <location>
        <begin position="244"/>
        <end position="246"/>
    </location>
</feature>
<feature type="site" description="Cleavage; by FURIN" evidence="1">
    <location>
        <begin position="278"/>
        <end position="279"/>
    </location>
</feature>
<feature type="glycosylation site" description="N-linked (GlcNAc...) asparagine" evidence="4">
    <location>
        <position position="82"/>
    </location>
</feature>
<feature type="glycosylation site" description="N-linked (GlcNAc...) asparagine" evidence="4">
    <location>
        <position position="136"/>
    </location>
</feature>
<feature type="glycosylation site" description="N-linked (GlcNAc...) asparagine" evidence="4">
    <location>
        <position position="176"/>
    </location>
</feature>
<feature type="disulfide bond" description="Interchain (with C-1359 or C-1384 in LTBP1); in inactive form" evidence="3">
    <location>
        <position position="33"/>
    </location>
</feature>
<feature type="disulfide bond" description="Interchain (with C-225)" evidence="1">
    <location>
        <position position="223"/>
    </location>
</feature>
<feature type="disulfide bond" description="Interchain (with C-223)" evidence="1">
    <location>
        <position position="225"/>
    </location>
</feature>
<feature type="disulfide bond" evidence="1">
    <location>
        <begin position="285"/>
        <end position="294"/>
    </location>
</feature>
<feature type="disulfide bond" evidence="1">
    <location>
        <begin position="293"/>
        <end position="356"/>
    </location>
</feature>
<feature type="disulfide bond" evidence="1">
    <location>
        <begin position="322"/>
        <end position="387"/>
    </location>
</feature>
<feature type="disulfide bond" evidence="1">
    <location>
        <begin position="326"/>
        <end position="389"/>
    </location>
</feature>
<feature type="disulfide bond" description="Interchain" evidence="1">
    <location>
        <position position="355"/>
    </location>
</feature>
<gene>
    <name type="primary">TGFB1</name>
</gene>
<protein>
    <recommendedName>
        <fullName>Transforming growth factor beta-1 proprotein</fullName>
    </recommendedName>
    <component>
        <recommendedName>
            <fullName>Latency-associated peptide</fullName>
            <shortName>LAP</shortName>
        </recommendedName>
    </component>
    <component>
        <recommendedName>
            <fullName>Transforming growth factor beta-1</fullName>
            <shortName>TGF-beta-1</shortName>
        </recommendedName>
    </component>
</protein>
<name>TGFB1_BOVIN</name>
<evidence type="ECO:0000250" key="1">
    <source>
        <dbReference type="UniProtKB" id="P01137"/>
    </source>
</evidence>
<evidence type="ECO:0000250" key="2">
    <source>
        <dbReference type="UniProtKB" id="P04202"/>
    </source>
</evidence>
<evidence type="ECO:0000250" key="3">
    <source>
        <dbReference type="UniProtKB" id="P07200"/>
    </source>
</evidence>
<evidence type="ECO:0000255" key="4"/>
<evidence type="ECO:0000305" key="5"/>
<proteinExistence type="evidence at protein level"/>
<accession>P18341</accession>
<accession>A5A3B8</accession>
<sequence>MPPSGLRLLPLLLPLLWLLMLTPGRPVAGLSTCKTIDMELVKRKRIEAIRGQILSKLRLASPPSQGDVPPGPLPEAILALYNSTRDRVAGESAETEPEPEADYYAKEVTRVLMVEYGNKIYDKMKSSSHSIYMFFNTSELREAVPEPVLLSRADVRLLRLKLKVEQHVELYQKYSNNSWRYLSNRLLAPSDSPEWLSFDVTGVVRQWLTRREEIEGFRLSAHCSCDSKDNTLQVDINGFSSGRRGDLATIHGMNRPFLLLMATPLERAQHLHSSRHRRALDTNYCFSSTEKNCCVRQLYIDFRKDLGWKWIHEPKGYHANFCLGPCPYIWSLDTQYSKVLALYNQHNPGASAAPCCVPQALEPLPIVYYVGRKPKVEQLSNMIVRSCKCS</sequence>
<comment type="function">
    <text evidence="1">Transforming growth factor beta-1 proprotein: Precursor of the Latency-associated peptide (LAP) and Transforming growth factor beta-1 (TGF-beta-1) chains, which constitute the regulatory and active subunit of TGF-beta-1, respectively.</text>
</comment>
<comment type="function">
    <molecule>Latency-associated peptide</molecule>
    <text evidence="1">Required to maintain the Transforming growth factor beta-1 (TGF-beta-1) chain in a latent state during storage in extracellular matrix. Associates non-covalently with TGF-beta-1 and regulates its activation via interaction with 'milieu molecules', such as LTBP1, LRRC32/GARP and LRRC33/NRROS, that control activation of TGF-beta-1. Interaction with LRRC33/NRROS regulates activation of TGF-beta-1 in macrophages and microglia. Interaction with LRRC32/GARP controls activation of TGF-beta-1 on the surface of activated regulatory T-cells (Tregs). Interaction with integrins (ITGAV:ITGB6 or ITGAV:ITGB8) results in distortion of the Latency-associated peptide chain and subsequent release of the active TGF-beta-1.</text>
</comment>
<comment type="function">
    <molecule>Transforming growth factor beta-1</molecule>
    <text evidence="1 2">Multifunctional protein that regulates the growth and differentiation of various cell types and is involved in various processes, such as normal development, immune function, microglia function and responses to neurodegeneration (By similarity). Activation into mature form follows different steps: following cleavage of the proprotein in the Golgi apparatus, Latency-associated peptide (LAP) and Transforming growth factor beta-1 (TGF-beta-1) chains remain non-covalently linked rendering TGF-beta-1 inactive during storage in extracellular matrix. At the same time, LAP chain interacts with 'milieu molecules', such as LTBP1, LRRC32/GARP and LRRC33/NRROS that control activation of TGF-beta-1 and maintain it in a latent state during storage in extracellular milieus. TGF-beta-1 is released from LAP by integrins (ITGAV:ITGB6 or ITGAV:ITGB8): integrin-binding to LAP stabilizes an alternative conformation of the LAP bowtie tail and results in distortion of the LAP chain and subsequent release of the active TGF-beta-1. Once activated following release of LAP, TGF-beta-1 acts by binding to TGF-beta receptors (TGFBR1 and TGFBR2), which transduce signal (By similarity). While expressed by many cells types, TGF-beta-1 only has a very localized range of action within cell environment thanks to fine regulation of its activation by Latency-associated peptide chain (LAP) and 'milieu molecules'. Plays an important role in bone remodeling: acts as a potent stimulator of osteoblastic bone formation, causing chemotaxis, proliferation and differentiation in committed osteoblasts. Can promote either T-helper 17 cells (Th17) or regulatory T-cells (Treg) lineage differentiation in a concentration-dependent manner. At high concentrations, leads to FOXP3-mediated suppression of RORC and down-regulation of IL-17 expression, favoring Treg cell development. At low concentrations in concert with IL-6 and IL-21, leads to expression of the IL-17 and IL-23 receptors, favoring differentiation to Th17 cells (By similarity). Stimulates sustained production of collagen through the activation of CREB3L1 by regulated intramembrane proteolysis (RIP). Mediates SMAD2/3 activation by inducing its phosphorylation and subsequent translocation to the nucleus. Positively regulates odontoblastic differentiation in dental papilla cells, via promotion of IPO7-mediated translocation of phosphorylated SMAD2 to the nucleus and subsequent transcription of target genes (By similarity). Can induce epithelial-to-mesenchymal transition (EMT) and cell migration in various cell types (By similarity).</text>
</comment>
<comment type="subunit">
    <text evidence="1 2">Homodimer; disulfide-linked. Interacts with the serine proteases, HTRA1 and HTRA3: the interaction with either inhibits TGFB1-mediated signaling and the HTRA protease activity is required for this inhibition. May interact with THSD4; this interaction may lead to sequestration by FBN1 microfibril assembly and attenuation of TGFB signaling. Interacts with CD109, DPT and ASPN. Interacts with EFEMP2 (By similarity). Interacts with TSKU; the interaction contributes to regulation of the hair cycle (By similarity). Interacts with TGFBR3 (By similarity).</text>
</comment>
<comment type="subunit">
    <molecule>Latency-associated peptide</molecule>
    <text evidence="1 2">Homodimer; disulfide-linked. Interacts with transforming growth factor beta-1 (TGF-beta-1) chain; interaction is non-covalent and maintains TGF-beta-1 in a latent state; each latency-associated peptide (LAP) monomer interacts with TGF-beta-1 in the other monomer. Interacts with LTBP1; leading to regulation of TGF-beta-1 activation. Interacts with LRRC32/GARP; leading to regulation of TGF-beta-1 activation on the surface of activated regulatory T-cells (Tregs). Interacts with LRRC33/NRROS; leading to regulation of TGF-beta-1 activation in macrophages and microglia. Interacts (via cell attachment site) with integrins ITGAV and ITGB6 (ITGAV:ITGB6), leading to release of the active TGF-beta-1 (By similarity). Interacts with NREP; the interaction results in a decrease in TGFB1 autoinduction (By similarity). Interacts with HSP90AB1; inhibits latent TGFB1 activation.</text>
</comment>
<comment type="subunit">
    <molecule>Transforming growth factor beta-1</molecule>
    <text evidence="1">Homodimer; disulfide-linked. Interacts with TGF-beta receptors (TGFBR1 and TGFBR2), leading to signal transduction. Interacts with EFEMP2.</text>
</comment>
<comment type="interaction">
    <interactant intactId="EBI-8537762">
        <id>P18341</id>
    </interactant>
    <interactant intactId="EBI-1221453">
        <id>P48616</id>
        <label>VIM</label>
    </interactant>
    <organismsDiffer>false</organismsDiffer>
    <experiments>2</experiments>
</comment>
<comment type="subcellular location">
    <molecule>Latency-associated peptide</molecule>
    <subcellularLocation>
        <location evidence="1">Secreted</location>
        <location evidence="1">Extracellular space</location>
        <location evidence="1">Extracellular matrix</location>
    </subcellularLocation>
</comment>
<comment type="subcellular location">
    <molecule>Transforming growth factor beta-1</molecule>
    <subcellularLocation>
        <location evidence="1">Secreted</location>
    </subcellularLocation>
</comment>
<comment type="domain">
    <molecule>Latency-associated peptide</molecule>
    <text evidence="3">The 'straitjacket' and 'arm' domains encircle the Transforming growth factor beta-1 (TGF-beta-1) monomers and are fastened together by strong bonding between Lys-56 and Tyr-103/Tyr-104.</text>
</comment>
<comment type="domain">
    <molecule>Latency-associated peptide</molecule>
    <text evidence="1">The cell attachment site motif mediates binding to integrins (ITGAV:ITGB6 or ITGAV:ITGB8). The motif locates to a long loop in the arm domain called the bowtie tail. Integrin-binding stabilizes an alternative conformation of the bowtie tail. Activation by integrin requires force application by the actin cytoskeleton, which is resisted by the 'milieu molecules' (such as LTBP1, LRRC32/GARP and/or LRRC33/NRROS), resulting in distortion of the prodomain and release of the active TGF-beta-1.</text>
</comment>
<comment type="PTM">
    <text evidence="1">Transforming growth factor beta-1 proprotein: The precursor proprotein is cleaved in the Golgi apparatus by FURIN to form Transforming growth factor beta-1 (TGF-beta-1) and Latency-associated peptide (LAP) chains, which remain non-covalently linked, rendering TGF-beta-1 inactive.</text>
</comment>
<comment type="PTM">
    <molecule>Latency-associated peptide</molecule>
    <text evidence="1">N-glycosylated. Deglycosylation leads to activation of Transforming growth factor beta-1 (TGF-beta-1); mechanisms triggering deglycosylation-driven activation of TGF-beta-1 are however unclear.</text>
</comment>
<comment type="similarity">
    <text evidence="5">Belongs to the TGF-beta family.</text>
</comment>
<reference key="1">
    <citation type="submission" date="2007-03" db="EMBL/GenBank/DDBJ databases">
        <authorList>
            <person name="Jiang C."/>
            <person name="Davis J.S."/>
        </authorList>
    </citation>
    <scope>NUCLEOTIDE SEQUENCE [GENOMIC DNA] OF 1-118</scope>
</reference>
<reference key="2">
    <citation type="journal article" date="1987" name="Mol. Endocrinol.">
        <title>Complementary deoxyribonucleic acid cloning of bovine transforming growth factor-beta 1.</title>
        <authorList>
            <person name="van Obberghen-Schilling E."/>
            <person name="Kondaiah P."/>
            <person name="Ludwig R.L."/>
            <person name="Sporn M.B."/>
            <person name="Baker C.C."/>
        </authorList>
    </citation>
    <scope>NUCLEOTIDE SEQUENCE [MRNA] OF 76-390</scope>
</reference>
<reference key="3">
    <citation type="journal article" date="1992" name="J. Biol. Chem.">
        <title>Purification and characterization of transforming growth factor-beta 2.3 and -beta 1.2 heterodimers from bovine bone.</title>
        <authorList>
            <person name="Ogawa Y."/>
            <person name="Schmidt D.K."/>
            <person name="Dasch J.R."/>
            <person name="Chang R.J."/>
            <person name="Glaser C.B."/>
        </authorList>
    </citation>
    <scope>SUBUNIT</scope>
    <source>
        <tissue>Bone</tissue>
    </source>
</reference>
<keyword id="KW-0165">Cleavage on pair of basic residues</keyword>
<keyword id="KW-1015">Disulfide bond</keyword>
<keyword id="KW-0272">Extracellular matrix</keyword>
<keyword id="KW-0325">Glycoprotein</keyword>
<keyword id="KW-0339">Growth factor</keyword>
<keyword id="KW-0497">Mitogen</keyword>
<keyword id="KW-1185">Reference proteome</keyword>
<keyword id="KW-0964">Secreted</keyword>
<keyword id="KW-0732">Signal</keyword>
<organism>
    <name type="scientific">Bos taurus</name>
    <name type="common">Bovine</name>
    <dbReference type="NCBI Taxonomy" id="9913"/>
    <lineage>
        <taxon>Eukaryota</taxon>
        <taxon>Metazoa</taxon>
        <taxon>Chordata</taxon>
        <taxon>Craniata</taxon>
        <taxon>Vertebrata</taxon>
        <taxon>Euteleostomi</taxon>
        <taxon>Mammalia</taxon>
        <taxon>Eutheria</taxon>
        <taxon>Laurasiatheria</taxon>
        <taxon>Artiodactyla</taxon>
        <taxon>Ruminantia</taxon>
        <taxon>Pecora</taxon>
        <taxon>Bovidae</taxon>
        <taxon>Bovinae</taxon>
        <taxon>Bos</taxon>
    </lineage>
</organism>
<dbReference type="EMBL" id="EF523342">
    <property type="protein sequence ID" value="ABP57733.1"/>
    <property type="molecule type" value="Genomic_DNA"/>
</dbReference>
<dbReference type="EMBL" id="M36271">
    <property type="protein sequence ID" value="AAA30778.1"/>
    <property type="molecule type" value="mRNA"/>
</dbReference>
<dbReference type="PIR" id="A40057">
    <property type="entry name" value="A40057"/>
</dbReference>
<dbReference type="RefSeq" id="NP_001159540.1">
    <property type="nucleotide sequence ID" value="NM_001166068.1"/>
</dbReference>
<dbReference type="SMR" id="P18341"/>
<dbReference type="FunCoup" id="P18341">
    <property type="interactions" value="861"/>
</dbReference>
<dbReference type="IntAct" id="P18341">
    <property type="interactions" value="1"/>
</dbReference>
<dbReference type="MINT" id="P18341"/>
<dbReference type="STRING" id="9913.ENSBTAP00000064484"/>
<dbReference type="GlyCosmos" id="P18341">
    <property type="glycosylation" value="3 sites, No reported glycans"/>
</dbReference>
<dbReference type="GlyGen" id="P18341">
    <property type="glycosylation" value="3 sites"/>
</dbReference>
<dbReference type="PaxDb" id="9913-ENSBTAP00000027261"/>
<dbReference type="GeneID" id="282089"/>
<dbReference type="KEGG" id="bta:282089"/>
<dbReference type="CTD" id="7040"/>
<dbReference type="eggNOG" id="KOG3900">
    <property type="taxonomic scope" value="Eukaryota"/>
</dbReference>
<dbReference type="InParanoid" id="P18341"/>
<dbReference type="OrthoDB" id="8863549at2759"/>
<dbReference type="Proteomes" id="UP000009136">
    <property type="component" value="Unplaced"/>
</dbReference>
<dbReference type="GO" id="GO:0072562">
    <property type="term" value="C:blood microparticle"/>
    <property type="evidence" value="ECO:0000250"/>
    <property type="project" value="AgBase"/>
</dbReference>
<dbReference type="GO" id="GO:0009986">
    <property type="term" value="C:cell surface"/>
    <property type="evidence" value="ECO:0000250"/>
    <property type="project" value="UniProtKB"/>
</dbReference>
<dbReference type="GO" id="GO:0005737">
    <property type="term" value="C:cytoplasm"/>
    <property type="evidence" value="ECO:0000250"/>
    <property type="project" value="UniProtKB"/>
</dbReference>
<dbReference type="GO" id="GO:0031012">
    <property type="term" value="C:extracellular matrix"/>
    <property type="evidence" value="ECO:0000250"/>
    <property type="project" value="UniProtKB"/>
</dbReference>
<dbReference type="GO" id="GO:0005615">
    <property type="term" value="C:extracellular space"/>
    <property type="evidence" value="ECO:0000250"/>
    <property type="project" value="UniProtKB"/>
</dbReference>
<dbReference type="GO" id="GO:0005634">
    <property type="term" value="C:nucleus"/>
    <property type="evidence" value="ECO:0000250"/>
    <property type="project" value="UniProtKB"/>
</dbReference>
<dbReference type="GO" id="GO:0005125">
    <property type="term" value="F:cytokine activity"/>
    <property type="evidence" value="ECO:0000318"/>
    <property type="project" value="GO_Central"/>
</dbReference>
<dbReference type="GO" id="GO:0008083">
    <property type="term" value="F:growth factor activity"/>
    <property type="evidence" value="ECO:0007669"/>
    <property type="project" value="UniProtKB-KW"/>
</dbReference>
<dbReference type="GO" id="GO:0034713">
    <property type="term" value="F:type I transforming growth factor beta receptor binding"/>
    <property type="evidence" value="ECO:0000250"/>
    <property type="project" value="AgBase"/>
</dbReference>
<dbReference type="GO" id="GO:0005114">
    <property type="term" value="F:type II transforming growth factor beta receptor binding"/>
    <property type="evidence" value="ECO:0000250"/>
    <property type="project" value="UniProtKB"/>
</dbReference>
<dbReference type="GO" id="GO:0034714">
    <property type="term" value="F:type III transforming growth factor beta receptor binding"/>
    <property type="evidence" value="ECO:0000250"/>
    <property type="project" value="AgBase"/>
</dbReference>
<dbReference type="GO" id="GO:0006754">
    <property type="term" value="P:ATP biosynthetic process"/>
    <property type="evidence" value="ECO:0000250"/>
    <property type="project" value="UniProtKB"/>
</dbReference>
<dbReference type="GO" id="GO:0045216">
    <property type="term" value="P:cell-cell junction organization"/>
    <property type="evidence" value="ECO:0000250"/>
    <property type="project" value="UniProtKB"/>
</dbReference>
<dbReference type="GO" id="GO:0071560">
    <property type="term" value="P:cellular response to transforming growth factor beta stimulus"/>
    <property type="evidence" value="ECO:0000250"/>
    <property type="project" value="AgBase"/>
</dbReference>
<dbReference type="GO" id="GO:0002062">
    <property type="term" value="P:chondrocyte differentiation"/>
    <property type="evidence" value="ECO:0000250"/>
    <property type="project" value="UniProtKB"/>
</dbReference>
<dbReference type="GO" id="GO:0001837">
    <property type="term" value="P:epithelial to mesenchymal transition"/>
    <property type="evidence" value="ECO:0000250"/>
    <property type="project" value="UniProtKB"/>
</dbReference>
<dbReference type="GO" id="GO:0085029">
    <property type="term" value="P:extracellular matrix assembly"/>
    <property type="evidence" value="ECO:0000250"/>
    <property type="project" value="UniProtKB"/>
</dbReference>
<dbReference type="GO" id="GO:0097191">
    <property type="term" value="P:extrinsic apoptotic signaling pathway"/>
    <property type="evidence" value="ECO:0000250"/>
    <property type="project" value="UniProtKB"/>
</dbReference>
<dbReference type="GO" id="GO:0002244">
    <property type="term" value="P:hematopoietic progenitor cell differentiation"/>
    <property type="evidence" value="ECO:0000250"/>
    <property type="project" value="UniProtKB"/>
</dbReference>
<dbReference type="GO" id="GO:0030214">
    <property type="term" value="P:hyaluronan catabolic process"/>
    <property type="evidence" value="ECO:0000250"/>
    <property type="project" value="UniProtKB"/>
</dbReference>
<dbReference type="GO" id="GO:0006954">
    <property type="term" value="P:inflammatory response"/>
    <property type="evidence" value="ECO:0000250"/>
    <property type="project" value="UniProtKB"/>
</dbReference>
<dbReference type="GO" id="GO:0048535">
    <property type="term" value="P:lymph node development"/>
    <property type="evidence" value="ECO:0000250"/>
    <property type="project" value="UniProtKB"/>
</dbReference>
<dbReference type="GO" id="GO:0031293">
    <property type="term" value="P:membrane protein intracellular domain proteolysis"/>
    <property type="evidence" value="ECO:0000250"/>
    <property type="project" value="UniProtKB"/>
</dbReference>
<dbReference type="GO" id="GO:0043537">
    <property type="term" value="P:negative regulation of blood vessel endothelial cell migration"/>
    <property type="evidence" value="ECO:0000250"/>
    <property type="project" value="UniProtKB"/>
</dbReference>
<dbReference type="GO" id="GO:0045786">
    <property type="term" value="P:negative regulation of cell cycle"/>
    <property type="evidence" value="ECO:0000250"/>
    <property type="project" value="UniProtKB"/>
</dbReference>
<dbReference type="GO" id="GO:0030308">
    <property type="term" value="P:negative regulation of cell growth"/>
    <property type="evidence" value="ECO:0000250"/>
    <property type="project" value="UniProtKB"/>
</dbReference>
<dbReference type="GO" id="GO:0008285">
    <property type="term" value="P:negative regulation of cell population proliferation"/>
    <property type="evidence" value="ECO:0000250"/>
    <property type="project" value="UniProtKB"/>
</dbReference>
<dbReference type="GO" id="GO:2000048">
    <property type="term" value="P:negative regulation of cell-cell adhesion mediated by cadherin"/>
    <property type="evidence" value="ECO:0000250"/>
    <property type="project" value="UniProtKB"/>
</dbReference>
<dbReference type="GO" id="GO:0045892">
    <property type="term" value="P:negative regulation of DNA-templated transcription"/>
    <property type="evidence" value="ECO:0000250"/>
    <property type="project" value="UniProtKB"/>
</dbReference>
<dbReference type="GO" id="GO:0050680">
    <property type="term" value="P:negative regulation of epithelial cell proliferation"/>
    <property type="evidence" value="ECO:0000250"/>
    <property type="project" value="UniProtKB"/>
</dbReference>
<dbReference type="GO" id="GO:0045599">
    <property type="term" value="P:negative regulation of fat cell differentiation"/>
    <property type="evidence" value="ECO:0000250"/>
    <property type="project" value="UniProtKB"/>
</dbReference>
<dbReference type="GO" id="GO:0010629">
    <property type="term" value="P:negative regulation of gene expression"/>
    <property type="evidence" value="ECO:0000250"/>
    <property type="project" value="BHF-UCL"/>
</dbReference>
<dbReference type="GO" id="GO:1900126">
    <property type="term" value="P:negative regulation of hyaluronan biosynthetic process"/>
    <property type="evidence" value="ECO:0000250"/>
    <property type="project" value="UniProtKB"/>
</dbReference>
<dbReference type="GO" id="GO:0010936">
    <property type="term" value="P:negative regulation of macrophage cytokine production"/>
    <property type="evidence" value="ECO:0000250"/>
    <property type="project" value="AgBase"/>
</dbReference>
<dbReference type="GO" id="GO:0045662">
    <property type="term" value="P:negative regulation of myoblast differentiation"/>
    <property type="evidence" value="ECO:0000250"/>
    <property type="project" value="UniProtKB"/>
</dbReference>
<dbReference type="GO" id="GO:0048642">
    <property type="term" value="P:negative regulation of skeletal muscle tissue development"/>
    <property type="evidence" value="ECO:0000250"/>
    <property type="project" value="UniProtKB"/>
</dbReference>
<dbReference type="GO" id="GO:0071895">
    <property type="term" value="P:odontoblast differentiation"/>
    <property type="evidence" value="ECO:0000250"/>
    <property type="project" value="UniProtKB"/>
</dbReference>
<dbReference type="GO" id="GO:0006796">
    <property type="term" value="P:phosphate-containing compound metabolic process"/>
    <property type="evidence" value="ECO:0000250"/>
    <property type="project" value="UniProtKB"/>
</dbReference>
<dbReference type="GO" id="GO:0043536">
    <property type="term" value="P:positive regulation of blood vessel endothelial cell migration"/>
    <property type="evidence" value="ECO:0000250"/>
    <property type="project" value="UniProtKB"/>
</dbReference>
<dbReference type="GO" id="GO:0051781">
    <property type="term" value="P:positive regulation of cell division"/>
    <property type="evidence" value="ECO:0007669"/>
    <property type="project" value="UniProtKB-KW"/>
</dbReference>
<dbReference type="GO" id="GO:0030335">
    <property type="term" value="P:positive regulation of cell migration"/>
    <property type="evidence" value="ECO:0000250"/>
    <property type="project" value="UniProtKB"/>
</dbReference>
<dbReference type="GO" id="GO:0008284">
    <property type="term" value="P:positive regulation of cell population proliferation"/>
    <property type="evidence" value="ECO:0000250"/>
    <property type="project" value="UniProtKB"/>
</dbReference>
<dbReference type="GO" id="GO:0050921">
    <property type="term" value="P:positive regulation of chemotaxis"/>
    <property type="evidence" value="ECO:0000250"/>
    <property type="project" value="UniProtKB"/>
</dbReference>
<dbReference type="GO" id="GO:0032967">
    <property type="term" value="P:positive regulation of collagen biosynthetic process"/>
    <property type="evidence" value="ECO:0000250"/>
    <property type="project" value="UniProtKB"/>
</dbReference>
<dbReference type="GO" id="GO:0045893">
    <property type="term" value="P:positive regulation of DNA-templated transcription"/>
    <property type="evidence" value="ECO:0000250"/>
    <property type="project" value="UniProtKB"/>
</dbReference>
<dbReference type="GO" id="GO:0045742">
    <property type="term" value="P:positive regulation of epidermal growth factor receptor signaling pathway"/>
    <property type="evidence" value="ECO:0000250"/>
    <property type="project" value="UniProtKB"/>
</dbReference>
<dbReference type="GO" id="GO:0010718">
    <property type="term" value="P:positive regulation of epithelial to mesenchymal transition"/>
    <property type="evidence" value="ECO:0000250"/>
    <property type="project" value="UniProtKB"/>
</dbReference>
<dbReference type="GO" id="GO:0070374">
    <property type="term" value="P:positive regulation of ERK1 and ERK2 cascade"/>
    <property type="evidence" value="ECO:0000250"/>
    <property type="project" value="UniProtKB"/>
</dbReference>
<dbReference type="GO" id="GO:0010763">
    <property type="term" value="P:positive regulation of fibroblast migration"/>
    <property type="evidence" value="ECO:0000250"/>
    <property type="project" value="UniProtKB"/>
</dbReference>
<dbReference type="GO" id="GO:0048146">
    <property type="term" value="P:positive regulation of fibroblast proliferation"/>
    <property type="evidence" value="ECO:0000315"/>
    <property type="project" value="AgBase"/>
</dbReference>
<dbReference type="GO" id="GO:0010628">
    <property type="term" value="P:positive regulation of gene expression"/>
    <property type="evidence" value="ECO:0000250"/>
    <property type="project" value="UniProtKB"/>
</dbReference>
<dbReference type="GO" id="GO:0032740">
    <property type="term" value="P:positive regulation of interleukin-17 production"/>
    <property type="evidence" value="ECO:0000250"/>
    <property type="project" value="UniProtKB"/>
</dbReference>
<dbReference type="GO" id="GO:0048298">
    <property type="term" value="P:positive regulation of isotype switching to IgA isotypes"/>
    <property type="evidence" value="ECO:0000250"/>
    <property type="project" value="AgBase"/>
</dbReference>
<dbReference type="GO" id="GO:0033601">
    <property type="term" value="P:positive regulation of mammary gland epithelial cell proliferation"/>
    <property type="evidence" value="ECO:0000315"/>
    <property type="project" value="AgBase"/>
</dbReference>
<dbReference type="GO" id="GO:0014008">
    <property type="term" value="P:positive regulation of microglia differentiation"/>
    <property type="evidence" value="ECO:0000250"/>
    <property type="project" value="UniProtKB"/>
</dbReference>
<dbReference type="GO" id="GO:0042307">
    <property type="term" value="P:positive regulation of protein import into nucleus"/>
    <property type="evidence" value="ECO:0000250"/>
    <property type="project" value="AgBase"/>
</dbReference>
<dbReference type="GO" id="GO:0051247">
    <property type="term" value="P:positive regulation of protein metabolic process"/>
    <property type="evidence" value="ECO:0000250"/>
    <property type="project" value="UniProtKB"/>
</dbReference>
<dbReference type="GO" id="GO:0050714">
    <property type="term" value="P:positive regulation of protein secretion"/>
    <property type="evidence" value="ECO:0000250"/>
    <property type="project" value="UniProtKB"/>
</dbReference>
<dbReference type="GO" id="GO:0031334">
    <property type="term" value="P:positive regulation of protein-containing complex assembly"/>
    <property type="evidence" value="ECO:0000250"/>
    <property type="project" value="UniProtKB"/>
</dbReference>
<dbReference type="GO" id="GO:0060391">
    <property type="term" value="P:positive regulation of SMAD protein signal transduction"/>
    <property type="evidence" value="ECO:0000250"/>
    <property type="project" value="UniProtKB"/>
</dbReference>
<dbReference type="GO" id="GO:0032930">
    <property type="term" value="P:positive regulation of superoxide anion generation"/>
    <property type="evidence" value="ECO:0000250"/>
    <property type="project" value="UniProtKB"/>
</dbReference>
<dbReference type="GO" id="GO:0045944">
    <property type="term" value="P:positive regulation of transcription by RNA polymerase II"/>
    <property type="evidence" value="ECO:0000250"/>
    <property type="project" value="AgBase"/>
</dbReference>
<dbReference type="GO" id="GO:1903620">
    <property type="term" value="P:positive regulation of transdifferentiation"/>
    <property type="evidence" value="ECO:0000315"/>
    <property type="project" value="AgBase"/>
</dbReference>
<dbReference type="GO" id="GO:0032801">
    <property type="term" value="P:receptor catabolic process"/>
    <property type="evidence" value="ECO:0000250"/>
    <property type="project" value="UniProtKB"/>
</dbReference>
<dbReference type="GO" id="GO:0042127">
    <property type="term" value="P:regulation of cell population proliferation"/>
    <property type="evidence" value="ECO:0000318"/>
    <property type="project" value="GO_Central"/>
</dbReference>
<dbReference type="GO" id="GO:0042306">
    <property type="term" value="P:regulation of protein import into nucleus"/>
    <property type="evidence" value="ECO:0000250"/>
    <property type="project" value="UniProtKB"/>
</dbReference>
<dbReference type="GO" id="GO:0016202">
    <property type="term" value="P:regulation of striated muscle tissue development"/>
    <property type="evidence" value="ECO:0000250"/>
    <property type="project" value="UniProtKB"/>
</dbReference>
<dbReference type="GO" id="GO:0070723">
    <property type="term" value="P:response to cholesterol"/>
    <property type="evidence" value="ECO:0000250"/>
    <property type="project" value="UniProtKB"/>
</dbReference>
<dbReference type="GO" id="GO:0032355">
    <property type="term" value="P:response to estradiol"/>
    <property type="evidence" value="ECO:0000250"/>
    <property type="project" value="UniProtKB"/>
</dbReference>
<dbReference type="GO" id="GO:0032570">
    <property type="term" value="P:response to progesterone"/>
    <property type="evidence" value="ECO:0000250"/>
    <property type="project" value="UniProtKB"/>
</dbReference>
<dbReference type="GO" id="GO:0009611">
    <property type="term" value="P:response to wounding"/>
    <property type="evidence" value="ECO:0000250"/>
    <property type="project" value="AgBase"/>
</dbReference>
<dbReference type="GO" id="GO:0007435">
    <property type="term" value="P:salivary gland morphogenesis"/>
    <property type="evidence" value="ECO:0000250"/>
    <property type="project" value="AgBase"/>
</dbReference>
<dbReference type="GO" id="GO:0007179">
    <property type="term" value="P:transforming growth factor beta receptor signaling pathway"/>
    <property type="evidence" value="ECO:0000250"/>
    <property type="project" value="UniProtKB"/>
</dbReference>
<dbReference type="CDD" id="cd19384">
    <property type="entry name" value="TGF_beta_TGFB1"/>
    <property type="match status" value="1"/>
</dbReference>
<dbReference type="FunFam" id="2.10.90.10:FF:000004">
    <property type="entry name" value="Transforming growth factor beta"/>
    <property type="match status" value="1"/>
</dbReference>
<dbReference type="FunFam" id="2.60.120.970:FF:000010">
    <property type="entry name" value="Transforming growth factor beta"/>
    <property type="match status" value="1"/>
</dbReference>
<dbReference type="Gene3D" id="2.60.120.970">
    <property type="match status" value="1"/>
</dbReference>
<dbReference type="Gene3D" id="2.10.90.10">
    <property type="entry name" value="Cystine-knot cytokines"/>
    <property type="match status" value="1"/>
</dbReference>
<dbReference type="InterPro" id="IPR029034">
    <property type="entry name" value="Cystine-knot_cytokine"/>
</dbReference>
<dbReference type="InterPro" id="IPR001839">
    <property type="entry name" value="TGF-b_C"/>
</dbReference>
<dbReference type="InterPro" id="IPR001111">
    <property type="entry name" value="TGF-b_propeptide"/>
</dbReference>
<dbReference type="InterPro" id="IPR016319">
    <property type="entry name" value="TGF-beta"/>
</dbReference>
<dbReference type="InterPro" id="IPR015615">
    <property type="entry name" value="TGF-beta-rel"/>
</dbReference>
<dbReference type="InterPro" id="IPR003939">
    <property type="entry name" value="TGFb1"/>
</dbReference>
<dbReference type="InterPro" id="IPR017948">
    <property type="entry name" value="TGFb_CS"/>
</dbReference>
<dbReference type="PANTHER" id="PTHR11848">
    <property type="entry name" value="TGF-BETA FAMILY"/>
    <property type="match status" value="1"/>
</dbReference>
<dbReference type="PANTHER" id="PTHR11848:SF125">
    <property type="entry name" value="TRANSFORMING GROWTH FACTOR BETA-1 PROPROTEIN"/>
    <property type="match status" value="1"/>
</dbReference>
<dbReference type="Pfam" id="PF00019">
    <property type="entry name" value="TGF_beta"/>
    <property type="match status" value="1"/>
</dbReference>
<dbReference type="Pfam" id="PF00688">
    <property type="entry name" value="TGFb_propeptide"/>
    <property type="match status" value="1"/>
</dbReference>
<dbReference type="PIRSF" id="PIRSF001787">
    <property type="entry name" value="TGF-beta"/>
    <property type="match status" value="1"/>
</dbReference>
<dbReference type="PRINTS" id="PR01423">
    <property type="entry name" value="TGFBETA"/>
</dbReference>
<dbReference type="PRINTS" id="PR01424">
    <property type="entry name" value="TGFBETA1"/>
</dbReference>
<dbReference type="SMART" id="SM00204">
    <property type="entry name" value="TGFB"/>
    <property type="match status" value="1"/>
</dbReference>
<dbReference type="SUPFAM" id="SSF57501">
    <property type="entry name" value="Cystine-knot cytokines"/>
    <property type="match status" value="1"/>
</dbReference>
<dbReference type="PROSITE" id="PS00250">
    <property type="entry name" value="TGF_BETA_1"/>
    <property type="match status" value="1"/>
</dbReference>
<dbReference type="PROSITE" id="PS51362">
    <property type="entry name" value="TGF_BETA_2"/>
    <property type="match status" value="1"/>
</dbReference>